<accession>Q9Z0S9</accession>
<accession>Q3TDB4</accession>
<name>PRAF1_MOUSE</name>
<evidence type="ECO:0000250" key="1"/>
<evidence type="ECO:0000250" key="2">
    <source>
        <dbReference type="UniProtKB" id="O35394"/>
    </source>
</evidence>
<evidence type="ECO:0000255" key="3"/>
<evidence type="ECO:0000269" key="4">
    <source>
    </source>
</evidence>
<evidence type="ECO:0000269" key="5">
    <source>
    </source>
</evidence>
<evidence type="ECO:0000269" key="6">
    <source>
    </source>
</evidence>
<evidence type="ECO:0000269" key="7">
    <source>
    </source>
</evidence>
<evidence type="ECO:0000305" key="8"/>
<protein>
    <recommendedName>
        <fullName>Prenylated Rab acceptor protein 1</fullName>
    </recommendedName>
    <alternativeName>
        <fullName>PRA1 family protein 1</fullName>
    </alternativeName>
    <alternativeName>
        <fullName>Prenylin</fullName>
    </alternativeName>
</protein>
<comment type="function">
    <text evidence="1 4">General Rab protein regulator required for vesicle formation from the Golgi complex. May control vesicle docking and fusion by mediating the action of Rab GTPases to the SNARE complexes. In addition it inhibits the removal of Rab GTPases from the membrane by GDI1 (By similarity).</text>
</comment>
<comment type="subunit">
    <text evidence="1 4 7">Homodimer. Interacts with VAMP2 (synaptobrevin-2), GDI1, NRDG1 and PCLO (By similarity). Interacts with prenylated Rab proteins (including RAB5 and RAB6), and with the members of the Ras superfamily HRAS, RHOA, TC21, and RAP1A.</text>
</comment>
<comment type="interaction">
    <interactant intactId="EBI-476965">
        <id>Q9Z0S9</id>
    </interactant>
    <interactant intactId="EBI-350145">
        <id>P01112</id>
        <label>HRAS</label>
    </interactant>
    <organismsDiffer>true</organismsDiffer>
    <experiments>4</experiments>
</comment>
<comment type="interaction">
    <interactant intactId="EBI-476965">
        <id>Q9Z0S9</id>
    </interactant>
    <interactant intactId="EBI-446668">
        <id>P61586</id>
        <label>RHOA</label>
    </interactant>
    <organismsDiffer>true</organismsDiffer>
    <experiments>2</experiments>
</comment>
<comment type="subcellular location">
    <subcellularLocation>
        <location evidence="2">Cell membrane</location>
        <topology evidence="3">Multi-pass membrane protein</topology>
    </subcellularLocation>
    <subcellularLocation>
        <location evidence="2">Cytoplasm</location>
    </subcellularLocation>
    <subcellularLocation>
        <location evidence="2">Golgi apparatus</location>
    </subcellularLocation>
    <subcellularLocation>
        <location evidence="2">Cytoplasmic vesicle</location>
        <location evidence="2">Secretory vesicle</location>
        <location evidence="2">Synaptic vesicle</location>
    </subcellularLocation>
    <text evidence="2">According to PubMed:11535589, it is an integral membrane protein, while other authors showed that it is cytoplasmic and membrane-associated to Golgi and synaptic vesicles.</text>
</comment>
<comment type="similarity">
    <text evidence="8">Belongs to the PRA1 family.</text>
</comment>
<comment type="caution">
    <text evidence="8">Interaction with the Ras-like GTPases failed to be confirmed in other species.</text>
</comment>
<organism>
    <name type="scientific">Mus musculus</name>
    <name type="common">Mouse</name>
    <dbReference type="NCBI Taxonomy" id="10090"/>
    <lineage>
        <taxon>Eukaryota</taxon>
        <taxon>Metazoa</taxon>
        <taxon>Chordata</taxon>
        <taxon>Craniata</taxon>
        <taxon>Vertebrata</taxon>
        <taxon>Euteleostomi</taxon>
        <taxon>Mammalia</taxon>
        <taxon>Eutheria</taxon>
        <taxon>Euarchontoglires</taxon>
        <taxon>Glires</taxon>
        <taxon>Rodentia</taxon>
        <taxon>Myomorpha</taxon>
        <taxon>Muroidea</taxon>
        <taxon>Muridae</taxon>
        <taxon>Murinae</taxon>
        <taxon>Mus</taxon>
        <taxon>Mus</taxon>
    </lineage>
</organism>
<keyword id="KW-1003">Cell membrane</keyword>
<keyword id="KW-0963">Cytoplasm</keyword>
<keyword id="KW-0968">Cytoplasmic vesicle</keyword>
<keyword id="KW-0333">Golgi apparatus</keyword>
<keyword id="KW-0472">Membrane</keyword>
<keyword id="KW-1185">Reference proteome</keyword>
<keyword id="KW-0770">Synapse</keyword>
<keyword id="KW-0812">Transmembrane</keyword>
<keyword id="KW-1133">Transmembrane helix</keyword>
<feature type="chain" id="PRO_0000220879" description="Prenylated Rab acceptor protein 1">
    <location>
        <begin position="1"/>
        <end position="185"/>
    </location>
</feature>
<feature type="topological domain" description="Cytoplasmic" evidence="5">
    <location>
        <begin position="1"/>
        <end position="78"/>
    </location>
</feature>
<feature type="transmembrane region" description="Helical">
    <location>
        <begin position="79"/>
        <end position="94"/>
    </location>
</feature>
<feature type="transmembrane region" description="Helical">
    <location>
        <begin position="95"/>
        <end position="112"/>
    </location>
</feature>
<feature type="topological domain" description="Cytoplasmic" evidence="5">
    <location>
        <begin position="113"/>
        <end position="131"/>
    </location>
</feature>
<feature type="transmembrane region" description="Helical">
    <location>
        <begin position="132"/>
        <end position="148"/>
    </location>
</feature>
<feature type="transmembrane region" description="Helical">
    <location>
        <begin position="149"/>
        <end position="165"/>
    </location>
</feature>
<feature type="topological domain" description="Cytoplasmic" evidence="5">
    <location>
        <begin position="166"/>
        <end position="185"/>
    </location>
</feature>
<feature type="region of interest" description="Required for interaction with prenylated RAB3A and VAMP2" evidence="1">
    <location>
        <begin position="30"/>
        <end position="54"/>
    </location>
</feature>
<feature type="region of interest" description="Required for interaction with GDI1" evidence="1">
    <location>
        <begin position="165"/>
        <end position="185"/>
    </location>
</feature>
<feature type="region of interest" description="Homodimerization">
    <location>
        <begin position="175"/>
        <end position="185"/>
    </location>
</feature>
<feature type="region of interest" description="Required for interaction with prenylated RAB3A and VAMP2" evidence="1">
    <location>
        <begin position="175"/>
        <end position="185"/>
    </location>
</feature>
<feature type="mutagenesis site" description="No effect." evidence="6">
    <original>D</original>
    <variation>A</variation>
    <location>
        <position position="176"/>
    </location>
</feature>
<feature type="mutagenesis site" description="No effect." evidence="6">
    <original>G</original>
    <variation>A</variation>
    <location>
        <position position="177"/>
    </location>
</feature>
<feature type="mutagenesis site" description="No effect." evidence="6">
    <original>E</original>
    <variation>A</variation>
    <location>
        <position position="178"/>
    </location>
</feature>
<feature type="mutagenesis site" description="No effect." evidence="6">
    <original>E</original>
    <variation>A</variation>
    <location>
        <position position="179"/>
    </location>
</feature>
<feature type="mutagenesis site" description="Partial retention in the endoplasmic reticulum." evidence="6">
    <original>V</original>
    <variation>A</variation>
    <variation>C</variation>
    <variation>I</variation>
    <variation>P</variation>
    <location>
        <position position="185"/>
    </location>
</feature>
<feature type="mutagenesis site" description="Retention in the endoplasmic reticulum; does not form homodimers." evidence="6">
    <original>V</original>
    <variation>D</variation>
    <variation>K</variation>
    <location>
        <position position="185"/>
    </location>
</feature>
<feature type="mutagenesis site" description="Retention in the endoplasmic reticulum." evidence="6">
    <original>V</original>
    <variation>M</variation>
    <variation>N</variation>
    <variation>Y</variation>
    <variation>H</variation>
    <variation>E</variation>
    <variation>Q</variation>
    <variation>T</variation>
    <variation>S</variation>
    <variation>L</variation>
    <variation>W</variation>
    <variation>F</variation>
    <variation>G</variation>
    <location>
        <position position="185"/>
    </location>
</feature>
<feature type="mutagenesis site" description="No effect." evidence="6">
    <original>V</original>
    <variation>R</variation>
    <location>
        <position position="185"/>
    </location>
</feature>
<feature type="mutagenesis site" description="Partial retention in the endoplasmic reticulum; still forms homodimers." evidence="6">
    <location>
        <position position="185"/>
    </location>
</feature>
<reference key="1">
    <citation type="journal article" date="2000" name="Biochem. Biophys. Res. Commun.">
        <title>Mouse prenylated Rab acceptor is a novel Golgi membrane protein.</title>
        <authorList>
            <person name="Liang Z."/>
            <person name="Li G."/>
        </authorList>
    </citation>
    <scope>NUCLEOTIDE SEQUENCE [MRNA]</scope>
</reference>
<reference key="2">
    <citation type="submission" date="1999-01" db="EMBL/GenBank/DDBJ databases">
        <title>Specific interaction of Dexras with prenylated rab acceptor 1 (PRA1).</title>
        <authorList>
            <person name="Behrend E.N."/>
            <person name="Kemppainen R.J."/>
        </authorList>
    </citation>
    <scope>NUCLEOTIDE SEQUENCE [MRNA]</scope>
    <source>
        <tissue>B-cell lymphoma</tissue>
    </source>
</reference>
<reference key="3">
    <citation type="journal article" date="2005" name="Science">
        <title>The transcriptional landscape of the mammalian genome.</title>
        <authorList>
            <person name="Carninci P."/>
            <person name="Kasukawa T."/>
            <person name="Katayama S."/>
            <person name="Gough J."/>
            <person name="Frith M.C."/>
            <person name="Maeda N."/>
            <person name="Oyama R."/>
            <person name="Ravasi T."/>
            <person name="Lenhard B."/>
            <person name="Wells C."/>
            <person name="Kodzius R."/>
            <person name="Shimokawa K."/>
            <person name="Bajic V.B."/>
            <person name="Brenner S.E."/>
            <person name="Batalov S."/>
            <person name="Forrest A.R."/>
            <person name="Zavolan M."/>
            <person name="Davis M.J."/>
            <person name="Wilming L.G."/>
            <person name="Aidinis V."/>
            <person name="Allen J.E."/>
            <person name="Ambesi-Impiombato A."/>
            <person name="Apweiler R."/>
            <person name="Aturaliya R.N."/>
            <person name="Bailey T.L."/>
            <person name="Bansal M."/>
            <person name="Baxter L."/>
            <person name="Beisel K.W."/>
            <person name="Bersano T."/>
            <person name="Bono H."/>
            <person name="Chalk A.M."/>
            <person name="Chiu K.P."/>
            <person name="Choudhary V."/>
            <person name="Christoffels A."/>
            <person name="Clutterbuck D.R."/>
            <person name="Crowe M.L."/>
            <person name="Dalla E."/>
            <person name="Dalrymple B.P."/>
            <person name="de Bono B."/>
            <person name="Della Gatta G."/>
            <person name="di Bernardo D."/>
            <person name="Down T."/>
            <person name="Engstrom P."/>
            <person name="Fagiolini M."/>
            <person name="Faulkner G."/>
            <person name="Fletcher C.F."/>
            <person name="Fukushima T."/>
            <person name="Furuno M."/>
            <person name="Futaki S."/>
            <person name="Gariboldi M."/>
            <person name="Georgii-Hemming P."/>
            <person name="Gingeras T.R."/>
            <person name="Gojobori T."/>
            <person name="Green R.E."/>
            <person name="Gustincich S."/>
            <person name="Harbers M."/>
            <person name="Hayashi Y."/>
            <person name="Hensch T.K."/>
            <person name="Hirokawa N."/>
            <person name="Hill D."/>
            <person name="Huminiecki L."/>
            <person name="Iacono M."/>
            <person name="Ikeo K."/>
            <person name="Iwama A."/>
            <person name="Ishikawa T."/>
            <person name="Jakt M."/>
            <person name="Kanapin A."/>
            <person name="Katoh M."/>
            <person name="Kawasawa Y."/>
            <person name="Kelso J."/>
            <person name="Kitamura H."/>
            <person name="Kitano H."/>
            <person name="Kollias G."/>
            <person name="Krishnan S.P."/>
            <person name="Kruger A."/>
            <person name="Kummerfeld S.K."/>
            <person name="Kurochkin I.V."/>
            <person name="Lareau L.F."/>
            <person name="Lazarevic D."/>
            <person name="Lipovich L."/>
            <person name="Liu J."/>
            <person name="Liuni S."/>
            <person name="McWilliam S."/>
            <person name="Madan Babu M."/>
            <person name="Madera M."/>
            <person name="Marchionni L."/>
            <person name="Matsuda H."/>
            <person name="Matsuzawa S."/>
            <person name="Miki H."/>
            <person name="Mignone F."/>
            <person name="Miyake S."/>
            <person name="Morris K."/>
            <person name="Mottagui-Tabar S."/>
            <person name="Mulder N."/>
            <person name="Nakano N."/>
            <person name="Nakauchi H."/>
            <person name="Ng P."/>
            <person name="Nilsson R."/>
            <person name="Nishiguchi S."/>
            <person name="Nishikawa S."/>
            <person name="Nori F."/>
            <person name="Ohara O."/>
            <person name="Okazaki Y."/>
            <person name="Orlando V."/>
            <person name="Pang K.C."/>
            <person name="Pavan W.J."/>
            <person name="Pavesi G."/>
            <person name="Pesole G."/>
            <person name="Petrovsky N."/>
            <person name="Piazza S."/>
            <person name="Reed J."/>
            <person name="Reid J.F."/>
            <person name="Ring B.Z."/>
            <person name="Ringwald M."/>
            <person name="Rost B."/>
            <person name="Ruan Y."/>
            <person name="Salzberg S.L."/>
            <person name="Sandelin A."/>
            <person name="Schneider C."/>
            <person name="Schoenbach C."/>
            <person name="Sekiguchi K."/>
            <person name="Semple C.A."/>
            <person name="Seno S."/>
            <person name="Sessa L."/>
            <person name="Sheng Y."/>
            <person name="Shibata Y."/>
            <person name="Shimada H."/>
            <person name="Shimada K."/>
            <person name="Silva D."/>
            <person name="Sinclair B."/>
            <person name="Sperling S."/>
            <person name="Stupka E."/>
            <person name="Sugiura K."/>
            <person name="Sultana R."/>
            <person name="Takenaka Y."/>
            <person name="Taki K."/>
            <person name="Tammoja K."/>
            <person name="Tan S.L."/>
            <person name="Tang S."/>
            <person name="Taylor M.S."/>
            <person name="Tegner J."/>
            <person name="Teichmann S.A."/>
            <person name="Ueda H.R."/>
            <person name="van Nimwegen E."/>
            <person name="Verardo R."/>
            <person name="Wei C.L."/>
            <person name="Yagi K."/>
            <person name="Yamanishi H."/>
            <person name="Zabarovsky E."/>
            <person name="Zhu S."/>
            <person name="Zimmer A."/>
            <person name="Hide W."/>
            <person name="Bult C."/>
            <person name="Grimmond S.M."/>
            <person name="Teasdale R.D."/>
            <person name="Liu E.T."/>
            <person name="Brusic V."/>
            <person name="Quackenbush J."/>
            <person name="Wahlestedt C."/>
            <person name="Mattick J.S."/>
            <person name="Hume D.A."/>
            <person name="Kai C."/>
            <person name="Sasaki D."/>
            <person name="Tomaru Y."/>
            <person name="Fukuda S."/>
            <person name="Kanamori-Katayama M."/>
            <person name="Suzuki M."/>
            <person name="Aoki J."/>
            <person name="Arakawa T."/>
            <person name="Iida J."/>
            <person name="Imamura K."/>
            <person name="Itoh M."/>
            <person name="Kato T."/>
            <person name="Kawaji H."/>
            <person name="Kawagashira N."/>
            <person name="Kawashima T."/>
            <person name="Kojima M."/>
            <person name="Kondo S."/>
            <person name="Konno H."/>
            <person name="Nakano K."/>
            <person name="Ninomiya N."/>
            <person name="Nishio T."/>
            <person name="Okada M."/>
            <person name="Plessy C."/>
            <person name="Shibata K."/>
            <person name="Shiraki T."/>
            <person name="Suzuki S."/>
            <person name="Tagami M."/>
            <person name="Waki K."/>
            <person name="Watahiki A."/>
            <person name="Okamura-Oho Y."/>
            <person name="Suzuki H."/>
            <person name="Kawai J."/>
            <person name="Hayashizaki Y."/>
        </authorList>
    </citation>
    <scope>NUCLEOTIDE SEQUENCE [LARGE SCALE MRNA]</scope>
    <source>
        <strain>C57BL/6J</strain>
        <tissue>Bone marrow</tissue>
        <tissue>Small intestine</tissue>
        <tissue>Tongue</tissue>
    </source>
</reference>
<reference key="4">
    <citation type="journal article" date="2004" name="Genome Res.">
        <title>The status, quality, and expansion of the NIH full-length cDNA project: the Mammalian Gene Collection (MGC).</title>
        <authorList>
            <consortium name="The MGC Project Team"/>
        </authorList>
    </citation>
    <scope>NUCLEOTIDE SEQUENCE [LARGE SCALE MRNA]</scope>
    <source>
        <strain>FVB/N-3</strain>
        <tissue>Mammary tumor</tissue>
    </source>
</reference>
<reference key="5">
    <citation type="journal article" date="1995" name="J. Biol. Chem.">
        <title>Two-hybrid system screen with the small GTP-binding protein Rab6. Identification of a novel mouse GDP dissociation inhibitor isoform and two other potential partners of Rab6.</title>
        <authorList>
            <person name="Janoueix-Lerosey I."/>
            <person name="Jollivet F."/>
            <person name="Camonis J."/>
            <person name="Marche P.N."/>
            <person name="Goud B."/>
        </authorList>
    </citation>
    <scope>NUCLEOTIDE SEQUENCE [MRNA] OF 6-36 AND 73-104</scope>
    <scope>INTERACTION WITH RAB5 AND RAB6</scope>
</reference>
<reference key="6">
    <citation type="journal article" date="2001" name="J. Biol. Chem.">
        <title>Prenylated Rab acceptor protein is a receptor for prenylated small GTPases.</title>
        <authorList>
            <person name="Figueroa C."/>
            <person name="Taylor J."/>
            <person name="Vojtek A.B."/>
        </authorList>
    </citation>
    <scope>FUNCTION</scope>
    <scope>INTERACTION WITH MEMBERS OF RAS SUPERFAMILY</scope>
    <scope>SUBCELLULAR LOCATION</scope>
</reference>
<reference key="7">
    <citation type="journal article" date="2001" name="J. Biol. Chem.">
        <title>Membrane topography and topogenesis of prenylated Rab acceptor (PRA1).</title>
        <authorList>
            <person name="Lin J."/>
            <person name="Liang Z."/>
            <person name="Zhang Z."/>
            <person name="Li G."/>
        </authorList>
    </citation>
    <scope>TOPOLOGY</scope>
</reference>
<reference key="8">
    <citation type="journal article" date="2004" name="Biochem. J.">
        <title>The C-terminus of prenylin is important in forming a dimer conformation necessary for endoplasmic-reticulum-to-Golgi transport.</title>
        <authorList>
            <person name="Liang Z."/>
            <person name="Veeraprame H."/>
            <person name="Bayan N."/>
            <person name="Li G."/>
        </authorList>
    </citation>
    <scope>SUBCELLULAR LOCATION</scope>
    <scope>HOMODIMERIZATION</scope>
    <scope>MUTAGENESIS OF ASP-176; GLY-177; GLU-178; GLU-179 AND VAL-185</scope>
</reference>
<reference key="9">
    <citation type="journal article" date="2010" name="Cell">
        <title>A tissue-specific atlas of mouse protein phosphorylation and expression.</title>
        <authorList>
            <person name="Huttlin E.L."/>
            <person name="Jedrychowski M.P."/>
            <person name="Elias J.E."/>
            <person name="Goswami T."/>
            <person name="Rad R."/>
            <person name="Beausoleil S.A."/>
            <person name="Villen J."/>
            <person name="Haas W."/>
            <person name="Sowa M.E."/>
            <person name="Gygi S.P."/>
        </authorList>
    </citation>
    <scope>IDENTIFICATION BY MASS SPECTROMETRY [LARGE SCALE ANALYSIS]</scope>
    <source>
        <tissue>Brain</tissue>
        <tissue>Kidney</tissue>
        <tissue>Liver</tissue>
        <tissue>Lung</tissue>
        <tissue>Pancreas</tissue>
        <tissue>Spleen</tissue>
        <tissue>Testis</tissue>
    </source>
</reference>
<gene>
    <name type="primary">Rabac1</name>
    <name type="synonym">Pra</name>
    <name type="synonym">Pra1</name>
    <name type="synonym">Praf1</name>
</gene>
<sequence length="185" mass="20619">MAAQKDQQKDAEGEGLSATTLLPKLIPSGAGREWLERRRATIRPWGTFVDQQRFSRPRNVGELCQRLVRNVEYYQSNYVFVFLGLILYCVVTSPMLLVALAVFFGACYILYLRTLQSKLVLFGREVSPAHQYALAGGVSFPFFWLAGAGSAVFWVLGATLVLIGSHAAFHQMEPADGEELQMEPV</sequence>
<dbReference type="EMBL" id="AF252856">
    <property type="protein sequence ID" value="AAF68476.1"/>
    <property type="molecule type" value="mRNA"/>
</dbReference>
<dbReference type="EMBL" id="AF120162">
    <property type="protein sequence ID" value="AAD17296.1"/>
    <property type="molecule type" value="mRNA"/>
</dbReference>
<dbReference type="EMBL" id="AK008559">
    <property type="protein sequence ID" value="BAB25744.1"/>
    <property type="molecule type" value="mRNA"/>
</dbReference>
<dbReference type="EMBL" id="AK009726">
    <property type="protein sequence ID" value="BAB26465.1"/>
    <property type="molecule type" value="mRNA"/>
</dbReference>
<dbReference type="EMBL" id="AK150681">
    <property type="protein sequence ID" value="BAE29761.1"/>
    <property type="molecule type" value="mRNA"/>
</dbReference>
<dbReference type="EMBL" id="AK170289">
    <property type="protein sequence ID" value="BAE41689.1"/>
    <property type="molecule type" value="mRNA"/>
</dbReference>
<dbReference type="EMBL" id="BC008242">
    <property type="protein sequence ID" value="AAH08242.1"/>
    <property type="molecule type" value="mRNA"/>
</dbReference>
<dbReference type="CCDS" id="CCDS20968.1"/>
<dbReference type="PIR" id="JC7369">
    <property type="entry name" value="JC7369"/>
</dbReference>
<dbReference type="RefSeq" id="NP_034391.1">
    <property type="nucleotide sequence ID" value="NM_010261.3"/>
</dbReference>
<dbReference type="BioGRID" id="199848">
    <property type="interactions" value="3"/>
</dbReference>
<dbReference type="FunCoup" id="Q9Z0S9">
    <property type="interactions" value="735"/>
</dbReference>
<dbReference type="IntAct" id="Q9Z0S9">
    <property type="interactions" value="45"/>
</dbReference>
<dbReference type="STRING" id="10090.ENSMUSP00000076227"/>
<dbReference type="iPTMnet" id="Q9Z0S9"/>
<dbReference type="PhosphoSitePlus" id="Q9Z0S9"/>
<dbReference type="SwissPalm" id="Q9Z0S9"/>
<dbReference type="PaxDb" id="10090-ENSMUSP00000076227"/>
<dbReference type="PeptideAtlas" id="Q9Z0S9"/>
<dbReference type="ProteomicsDB" id="289393"/>
<dbReference type="Pumba" id="Q9Z0S9"/>
<dbReference type="Antibodypedia" id="30866">
    <property type="antibodies" value="63 antibodies from 24 providers"/>
</dbReference>
<dbReference type="DNASU" id="14470"/>
<dbReference type="Ensembl" id="ENSMUST00000076961.9">
    <property type="protein sequence ID" value="ENSMUSP00000076227.8"/>
    <property type="gene ID" value="ENSMUSG00000003380.12"/>
</dbReference>
<dbReference type="GeneID" id="14470"/>
<dbReference type="KEGG" id="mmu:14470"/>
<dbReference type="UCSC" id="uc009frd.1">
    <property type="organism name" value="mouse"/>
</dbReference>
<dbReference type="AGR" id="MGI:1201692"/>
<dbReference type="CTD" id="10567"/>
<dbReference type="MGI" id="MGI:1201692">
    <property type="gene designation" value="Rabac1"/>
</dbReference>
<dbReference type="VEuPathDB" id="HostDB:ENSMUSG00000003380"/>
<dbReference type="eggNOG" id="KOG3142">
    <property type="taxonomic scope" value="Eukaryota"/>
</dbReference>
<dbReference type="GeneTree" id="ENSGT00390000010549"/>
<dbReference type="HOGENOM" id="CLU_103851_0_2_1"/>
<dbReference type="InParanoid" id="Q9Z0S9"/>
<dbReference type="OMA" id="FHQIEPA"/>
<dbReference type="OrthoDB" id="24272at9989"/>
<dbReference type="PhylomeDB" id="Q9Z0S9"/>
<dbReference type="TreeFam" id="TF324857"/>
<dbReference type="BioGRID-ORCS" id="14470">
    <property type="hits" value="1 hit in 79 CRISPR screens"/>
</dbReference>
<dbReference type="ChiTaRS" id="Rabac1">
    <property type="organism name" value="mouse"/>
</dbReference>
<dbReference type="PRO" id="PR:Q9Z0S9"/>
<dbReference type="Proteomes" id="UP000000589">
    <property type="component" value="Chromosome 7"/>
</dbReference>
<dbReference type="RNAct" id="Q9Z0S9">
    <property type="molecule type" value="protein"/>
</dbReference>
<dbReference type="Bgee" id="ENSMUSG00000003380">
    <property type="expression patterns" value="Expressed in choroid plexus of fourth ventricle and 255 other cell types or tissues"/>
</dbReference>
<dbReference type="ExpressionAtlas" id="Q9Z0S9">
    <property type="expression patterns" value="baseline and differential"/>
</dbReference>
<dbReference type="GO" id="GO:0098978">
    <property type="term" value="C:glutamatergic synapse"/>
    <property type="evidence" value="ECO:0007669"/>
    <property type="project" value="Ensembl"/>
</dbReference>
<dbReference type="GO" id="GO:0005794">
    <property type="term" value="C:Golgi apparatus"/>
    <property type="evidence" value="ECO:0000314"/>
    <property type="project" value="MGI"/>
</dbReference>
<dbReference type="GO" id="GO:0016020">
    <property type="term" value="C:membrane"/>
    <property type="evidence" value="ECO:0000314"/>
    <property type="project" value="MGI"/>
</dbReference>
<dbReference type="GO" id="GO:0005886">
    <property type="term" value="C:plasma membrane"/>
    <property type="evidence" value="ECO:0007669"/>
    <property type="project" value="UniProtKB-SubCell"/>
</dbReference>
<dbReference type="GO" id="GO:0008021">
    <property type="term" value="C:synaptic vesicle"/>
    <property type="evidence" value="ECO:0007669"/>
    <property type="project" value="UniProtKB-SubCell"/>
</dbReference>
<dbReference type="GO" id="GO:0051020">
    <property type="term" value="F:GTPase binding"/>
    <property type="evidence" value="ECO:0007669"/>
    <property type="project" value="Ensembl"/>
</dbReference>
<dbReference type="GO" id="GO:0042802">
    <property type="term" value="F:identical protein binding"/>
    <property type="evidence" value="ECO:0007669"/>
    <property type="project" value="Ensembl"/>
</dbReference>
<dbReference type="GO" id="GO:0070064">
    <property type="term" value="F:proline-rich region binding"/>
    <property type="evidence" value="ECO:0007669"/>
    <property type="project" value="Ensembl"/>
</dbReference>
<dbReference type="InterPro" id="IPR004895">
    <property type="entry name" value="Prenylated_rab_accept_PRA1"/>
</dbReference>
<dbReference type="PANTHER" id="PTHR19317">
    <property type="entry name" value="PRENYLATED RAB ACCEPTOR 1-RELATED"/>
    <property type="match status" value="1"/>
</dbReference>
<dbReference type="PANTHER" id="PTHR19317:SF0">
    <property type="entry name" value="PRENYLATED RAB ACCEPTOR PROTEIN 1"/>
    <property type="match status" value="1"/>
</dbReference>
<dbReference type="Pfam" id="PF03208">
    <property type="entry name" value="PRA1"/>
    <property type="match status" value="1"/>
</dbReference>
<proteinExistence type="evidence at protein level"/>